<dbReference type="EC" id="2.1.1.33" evidence="2"/>
<dbReference type="EMBL" id="CP001215">
    <property type="protein sequence ID" value="ACP15915.1"/>
    <property type="molecule type" value="Genomic_DNA"/>
</dbReference>
<dbReference type="RefSeq" id="WP_001239380.1">
    <property type="nucleotide sequence ID" value="NC_012581.1"/>
</dbReference>
<dbReference type="SMR" id="C3LA04"/>
<dbReference type="GeneID" id="75087864"/>
<dbReference type="KEGG" id="bah:BAMEG_4980"/>
<dbReference type="HOGENOM" id="CLU_050910_2_1_9"/>
<dbReference type="UniPathway" id="UPA00989"/>
<dbReference type="GO" id="GO:0043527">
    <property type="term" value="C:tRNA methyltransferase complex"/>
    <property type="evidence" value="ECO:0007669"/>
    <property type="project" value="TreeGrafter"/>
</dbReference>
<dbReference type="GO" id="GO:0008176">
    <property type="term" value="F:tRNA (guanine(46)-N7)-methyltransferase activity"/>
    <property type="evidence" value="ECO:0007669"/>
    <property type="project" value="UniProtKB-UniRule"/>
</dbReference>
<dbReference type="CDD" id="cd02440">
    <property type="entry name" value="AdoMet_MTases"/>
    <property type="match status" value="1"/>
</dbReference>
<dbReference type="FunFam" id="3.40.50.150:FF:000035">
    <property type="entry name" value="tRNA (guanine-N(7)-)-methyltransferase"/>
    <property type="match status" value="1"/>
</dbReference>
<dbReference type="Gene3D" id="3.40.50.150">
    <property type="entry name" value="Vaccinia Virus protein VP39"/>
    <property type="match status" value="1"/>
</dbReference>
<dbReference type="HAMAP" id="MF_01057">
    <property type="entry name" value="tRNA_methyltr_TrmB"/>
    <property type="match status" value="1"/>
</dbReference>
<dbReference type="InterPro" id="IPR029063">
    <property type="entry name" value="SAM-dependent_MTases_sf"/>
</dbReference>
<dbReference type="InterPro" id="IPR003358">
    <property type="entry name" value="tRNA_(Gua-N-7)_MeTrfase_Trmb"/>
</dbReference>
<dbReference type="InterPro" id="IPR055361">
    <property type="entry name" value="tRNA_methyltr_TrmB_bact"/>
</dbReference>
<dbReference type="NCBIfam" id="NF001080">
    <property type="entry name" value="PRK00121.2-2"/>
    <property type="match status" value="1"/>
</dbReference>
<dbReference type="NCBIfam" id="TIGR00091">
    <property type="entry name" value="tRNA (guanosine(46)-N7)-methyltransferase TrmB"/>
    <property type="match status" value="1"/>
</dbReference>
<dbReference type="PANTHER" id="PTHR23417">
    <property type="entry name" value="3-DEOXY-D-MANNO-OCTULOSONIC-ACID TRANSFERASE/TRNA GUANINE-N 7 - -METHYLTRANSFERASE"/>
    <property type="match status" value="1"/>
</dbReference>
<dbReference type="PANTHER" id="PTHR23417:SF14">
    <property type="entry name" value="PENTACOTRIPEPTIDE-REPEAT REGION OF PRORP DOMAIN-CONTAINING PROTEIN"/>
    <property type="match status" value="1"/>
</dbReference>
<dbReference type="Pfam" id="PF02390">
    <property type="entry name" value="Methyltransf_4"/>
    <property type="match status" value="1"/>
</dbReference>
<dbReference type="SUPFAM" id="SSF53335">
    <property type="entry name" value="S-adenosyl-L-methionine-dependent methyltransferases"/>
    <property type="match status" value="1"/>
</dbReference>
<dbReference type="PROSITE" id="PS51625">
    <property type="entry name" value="SAM_MT_TRMB"/>
    <property type="match status" value="1"/>
</dbReference>
<keyword id="KW-0489">Methyltransferase</keyword>
<keyword id="KW-0949">S-adenosyl-L-methionine</keyword>
<keyword id="KW-0808">Transferase</keyword>
<keyword id="KW-0819">tRNA processing</keyword>
<proteinExistence type="inferred from homology"/>
<accession>C3LA04</accession>
<organism>
    <name type="scientific">Bacillus anthracis (strain CDC 684 / NRRL 3495)</name>
    <dbReference type="NCBI Taxonomy" id="568206"/>
    <lineage>
        <taxon>Bacteria</taxon>
        <taxon>Bacillati</taxon>
        <taxon>Bacillota</taxon>
        <taxon>Bacilli</taxon>
        <taxon>Bacillales</taxon>
        <taxon>Bacillaceae</taxon>
        <taxon>Bacillus</taxon>
        <taxon>Bacillus cereus group</taxon>
    </lineage>
</organism>
<protein>
    <recommendedName>
        <fullName evidence="2">tRNA (guanine-N(7)-)-methyltransferase</fullName>
        <ecNumber evidence="2">2.1.1.33</ecNumber>
    </recommendedName>
    <alternativeName>
        <fullName evidence="2">tRNA (guanine(46)-N(7))-methyltransferase</fullName>
    </alternativeName>
    <alternativeName>
        <fullName evidence="2">tRNA(m7G46)-methyltransferase</fullName>
    </alternativeName>
</protein>
<name>TRMB_BACAC</name>
<comment type="function">
    <text evidence="2">Catalyzes the formation of N(7)-methylguanine at position 46 (m7G46) in tRNA.</text>
</comment>
<comment type="catalytic activity">
    <reaction evidence="2">
        <text>guanosine(46) in tRNA + S-adenosyl-L-methionine = N(7)-methylguanosine(46) in tRNA + S-adenosyl-L-homocysteine</text>
        <dbReference type="Rhea" id="RHEA:42708"/>
        <dbReference type="Rhea" id="RHEA-COMP:10188"/>
        <dbReference type="Rhea" id="RHEA-COMP:10189"/>
        <dbReference type="ChEBI" id="CHEBI:57856"/>
        <dbReference type="ChEBI" id="CHEBI:59789"/>
        <dbReference type="ChEBI" id="CHEBI:74269"/>
        <dbReference type="ChEBI" id="CHEBI:74480"/>
        <dbReference type="EC" id="2.1.1.33"/>
    </reaction>
</comment>
<comment type="pathway">
    <text evidence="2">tRNA modification; N(7)-methylguanine-tRNA biosynthesis.</text>
</comment>
<comment type="similarity">
    <text evidence="2">Belongs to the class I-like SAM-binding methyltransferase superfamily. TrmB family.</text>
</comment>
<reference key="1">
    <citation type="submission" date="2008-10" db="EMBL/GenBank/DDBJ databases">
        <title>Genome sequence of Bacillus anthracis str. CDC 684.</title>
        <authorList>
            <person name="Dodson R.J."/>
            <person name="Munk A.C."/>
            <person name="Brettin T."/>
            <person name="Bruce D."/>
            <person name="Detter C."/>
            <person name="Tapia R."/>
            <person name="Han C."/>
            <person name="Sutton G."/>
            <person name="Sims D."/>
        </authorList>
    </citation>
    <scope>NUCLEOTIDE SEQUENCE [LARGE SCALE GENOMIC DNA]</scope>
    <source>
        <strain>CDC 684 / NRRL 3495</strain>
    </source>
</reference>
<sequence>MRLRHKPYAMDRINEYSHIVIGNPEERAGNWKEVFGNEQPIHIEVGTGRGRFMYDMAKANPHINYIGIEKFTSVVVDALDKLIEEELPNLKLINKDAEDLTVFFAKGEIDRVYLNFSDPWPKKRHTKRRLTYKTFLRNYEEVLVEGGEIHFKTDNQGLFEYSLMSMAEYGMLLTYLSLDLHNSDFEGNIMTEYEEKFSSKGHRIYRVEAKYRTEPMQ</sequence>
<evidence type="ECO:0000250" key="1"/>
<evidence type="ECO:0000255" key="2">
    <source>
        <dbReference type="HAMAP-Rule" id="MF_01057"/>
    </source>
</evidence>
<gene>
    <name evidence="2" type="primary">trmB</name>
    <name type="ordered locus">BAMEG_4980</name>
</gene>
<feature type="chain" id="PRO_1000149643" description="tRNA (guanine-N(7)-)-methyltransferase">
    <location>
        <begin position="1"/>
        <end position="217"/>
    </location>
</feature>
<feature type="active site" evidence="1">
    <location>
        <position position="118"/>
    </location>
</feature>
<feature type="binding site" evidence="2">
    <location>
        <position position="44"/>
    </location>
    <ligand>
        <name>S-adenosyl-L-methionine</name>
        <dbReference type="ChEBI" id="CHEBI:59789"/>
    </ligand>
</feature>
<feature type="binding site" evidence="2">
    <location>
        <position position="69"/>
    </location>
    <ligand>
        <name>S-adenosyl-L-methionine</name>
        <dbReference type="ChEBI" id="CHEBI:59789"/>
    </ligand>
</feature>
<feature type="binding site" evidence="2">
    <location>
        <position position="96"/>
    </location>
    <ligand>
        <name>S-adenosyl-L-methionine</name>
        <dbReference type="ChEBI" id="CHEBI:59789"/>
    </ligand>
</feature>
<feature type="binding site" evidence="2">
    <location>
        <position position="118"/>
    </location>
    <ligand>
        <name>S-adenosyl-L-methionine</name>
        <dbReference type="ChEBI" id="CHEBI:59789"/>
    </ligand>
</feature>
<feature type="binding site" evidence="2">
    <location>
        <position position="122"/>
    </location>
    <ligand>
        <name>substrate</name>
    </ligand>
</feature>
<feature type="binding site" evidence="2">
    <location>
        <position position="154"/>
    </location>
    <ligand>
        <name>substrate</name>
    </ligand>
</feature>
<feature type="binding site" evidence="2">
    <location>
        <begin position="191"/>
        <end position="194"/>
    </location>
    <ligand>
        <name>substrate</name>
    </ligand>
</feature>